<protein>
    <recommendedName>
        <fullName>Probable arylamine N-acetyltransferase 2</fullName>
        <ecNumber>2.3.1.5</ecNumber>
    </recommendedName>
    <alternativeName>
        <fullName>Arylamide acetylase 2</fullName>
    </alternativeName>
    <alternativeName>
        <fullName>N-acetyltransferase type 2</fullName>
        <shortName>NAT-2</shortName>
    </alternativeName>
</protein>
<dbReference type="EC" id="2.3.1.5"/>
<dbReference type="EMBL" id="AAFI02000113">
    <property type="protein sequence ID" value="EAL63187.1"/>
    <property type="molecule type" value="Genomic_DNA"/>
</dbReference>
<dbReference type="RefSeq" id="XP_636690.1">
    <property type="nucleotide sequence ID" value="XM_631598.1"/>
</dbReference>
<dbReference type="SMR" id="Q54IU8"/>
<dbReference type="FunCoup" id="Q54IU8">
    <property type="interactions" value="2"/>
</dbReference>
<dbReference type="PaxDb" id="44689-DDB0267113"/>
<dbReference type="EnsemblProtists" id="EAL63187">
    <property type="protein sequence ID" value="EAL63187"/>
    <property type="gene ID" value="DDB_G0288507"/>
</dbReference>
<dbReference type="GeneID" id="8626662"/>
<dbReference type="KEGG" id="ddi:DDB_G0288507"/>
<dbReference type="dictyBase" id="DDB_G0288507">
    <property type="gene designation" value="nat3"/>
</dbReference>
<dbReference type="VEuPathDB" id="AmoebaDB:DDB_G0288507"/>
<dbReference type="eggNOG" id="ENOG502RI6E">
    <property type="taxonomic scope" value="Eukaryota"/>
</dbReference>
<dbReference type="HOGENOM" id="CLU_049918_4_0_1"/>
<dbReference type="InParanoid" id="Q54IU8"/>
<dbReference type="OMA" id="IMESVAY"/>
<dbReference type="PhylomeDB" id="Q54IU8"/>
<dbReference type="PRO" id="PR:Q54IU8"/>
<dbReference type="Proteomes" id="UP000002195">
    <property type="component" value="Chromosome 5"/>
</dbReference>
<dbReference type="GO" id="GO:0004060">
    <property type="term" value="F:arylamine N-acetyltransferase activity"/>
    <property type="evidence" value="ECO:0007669"/>
    <property type="project" value="UniProtKB-EC"/>
</dbReference>
<dbReference type="FunFam" id="3.30.2140.20:FF:000002">
    <property type="entry name" value="Arylamine N-acetyltransferase"/>
    <property type="match status" value="1"/>
</dbReference>
<dbReference type="Gene3D" id="3.30.2140.20">
    <property type="match status" value="1"/>
</dbReference>
<dbReference type="InterPro" id="IPR001447">
    <property type="entry name" value="Arylamine_N-AcTrfase"/>
</dbReference>
<dbReference type="InterPro" id="IPR053710">
    <property type="entry name" value="Arylamine_NAT_domain_sf"/>
</dbReference>
<dbReference type="InterPro" id="IPR038765">
    <property type="entry name" value="Papain-like_cys_pep_sf"/>
</dbReference>
<dbReference type="PANTHER" id="PTHR11786:SF9">
    <property type="entry name" value="ARYLAMINE N-ACETYLTRANSFERASE 1-RELATED"/>
    <property type="match status" value="1"/>
</dbReference>
<dbReference type="PANTHER" id="PTHR11786">
    <property type="entry name" value="N-HYDROXYARYLAMINE O-ACETYLTRANSFERASE"/>
    <property type="match status" value="1"/>
</dbReference>
<dbReference type="Pfam" id="PF00797">
    <property type="entry name" value="Acetyltransf_2"/>
    <property type="match status" value="1"/>
</dbReference>
<dbReference type="PRINTS" id="PR01543">
    <property type="entry name" value="ANATRNSFRASE"/>
</dbReference>
<dbReference type="SUPFAM" id="SSF54001">
    <property type="entry name" value="Cysteine proteinases"/>
    <property type="match status" value="1"/>
</dbReference>
<comment type="catalytic activity">
    <reaction>
        <text>an arylamine + acetyl-CoA = an N-acetylarylamine + CoA</text>
        <dbReference type="Rhea" id="RHEA:16613"/>
        <dbReference type="ChEBI" id="CHEBI:13790"/>
        <dbReference type="ChEBI" id="CHEBI:50471"/>
        <dbReference type="ChEBI" id="CHEBI:57287"/>
        <dbReference type="ChEBI" id="CHEBI:57288"/>
        <dbReference type="EC" id="2.3.1.5"/>
    </reaction>
</comment>
<comment type="similarity">
    <text evidence="2">Belongs to the arylamine N-acetyltransferase family.</text>
</comment>
<evidence type="ECO:0000250" key="1"/>
<evidence type="ECO:0000305" key="2"/>
<reference key="1">
    <citation type="journal article" date="2005" name="Nature">
        <title>The genome of the social amoeba Dictyostelium discoideum.</title>
        <authorList>
            <person name="Eichinger L."/>
            <person name="Pachebat J.A."/>
            <person name="Gloeckner G."/>
            <person name="Rajandream M.A."/>
            <person name="Sucgang R."/>
            <person name="Berriman M."/>
            <person name="Song J."/>
            <person name="Olsen R."/>
            <person name="Szafranski K."/>
            <person name="Xu Q."/>
            <person name="Tunggal B."/>
            <person name="Kummerfeld S."/>
            <person name="Madera M."/>
            <person name="Konfortov B.A."/>
            <person name="Rivero F."/>
            <person name="Bankier A.T."/>
            <person name="Lehmann R."/>
            <person name="Hamlin N."/>
            <person name="Davies R."/>
            <person name="Gaudet P."/>
            <person name="Fey P."/>
            <person name="Pilcher K."/>
            <person name="Chen G."/>
            <person name="Saunders D."/>
            <person name="Sodergren E.J."/>
            <person name="Davis P."/>
            <person name="Kerhornou A."/>
            <person name="Nie X."/>
            <person name="Hall N."/>
            <person name="Anjard C."/>
            <person name="Hemphill L."/>
            <person name="Bason N."/>
            <person name="Farbrother P."/>
            <person name="Desany B."/>
            <person name="Just E."/>
            <person name="Morio T."/>
            <person name="Rost R."/>
            <person name="Churcher C.M."/>
            <person name="Cooper J."/>
            <person name="Haydock S."/>
            <person name="van Driessche N."/>
            <person name="Cronin A."/>
            <person name="Goodhead I."/>
            <person name="Muzny D.M."/>
            <person name="Mourier T."/>
            <person name="Pain A."/>
            <person name="Lu M."/>
            <person name="Harper D."/>
            <person name="Lindsay R."/>
            <person name="Hauser H."/>
            <person name="James K.D."/>
            <person name="Quiles M."/>
            <person name="Madan Babu M."/>
            <person name="Saito T."/>
            <person name="Buchrieser C."/>
            <person name="Wardroper A."/>
            <person name="Felder M."/>
            <person name="Thangavelu M."/>
            <person name="Johnson D."/>
            <person name="Knights A."/>
            <person name="Loulseged H."/>
            <person name="Mungall K.L."/>
            <person name="Oliver K."/>
            <person name="Price C."/>
            <person name="Quail M.A."/>
            <person name="Urushihara H."/>
            <person name="Hernandez J."/>
            <person name="Rabbinowitsch E."/>
            <person name="Steffen D."/>
            <person name="Sanders M."/>
            <person name="Ma J."/>
            <person name="Kohara Y."/>
            <person name="Sharp S."/>
            <person name="Simmonds M.N."/>
            <person name="Spiegler S."/>
            <person name="Tivey A."/>
            <person name="Sugano S."/>
            <person name="White B."/>
            <person name="Walker D."/>
            <person name="Woodward J.R."/>
            <person name="Winckler T."/>
            <person name="Tanaka Y."/>
            <person name="Shaulsky G."/>
            <person name="Schleicher M."/>
            <person name="Weinstock G.M."/>
            <person name="Rosenthal A."/>
            <person name="Cox E.C."/>
            <person name="Chisholm R.L."/>
            <person name="Gibbs R.A."/>
            <person name="Loomis W.F."/>
            <person name="Platzer M."/>
            <person name="Kay R.R."/>
            <person name="Williams J.G."/>
            <person name="Dear P.H."/>
            <person name="Noegel A.A."/>
            <person name="Barrell B.G."/>
            <person name="Kuspa A."/>
        </authorList>
    </citation>
    <scope>NUCLEOTIDE SEQUENCE [LARGE SCALE GENOMIC DNA]</scope>
    <source>
        <strain>AX4</strain>
    </source>
</reference>
<sequence length="299" mass="34522">MEPNPIFSEFQLEFFKRIKMQPKSIETLNDVSEVMSGCAQIFSFENLDVVANTTEPLNREVIIQQLVNNKQGGLCYKINSVFYYFIKSFGFNIYQVRCCVENQETHDCWQINGAHIINIIEYENKKYLADVAFGCNLSYEPIPFSEEIIESCTGLYRIRKVDNIIRDIKYTYLLEFKKPDSFSPESARLWTNGYAFDPLVKAIDIDENDKIDSHATQIQQLIIDDPTKEFSVKPLATKVVNNESIATLTSNSFTLTNCKTGEKTKVTFDINNEIKQLEQFNQHLISIFNLPPLKFLPKI</sequence>
<keyword id="KW-0012">Acyltransferase</keyword>
<keyword id="KW-1185">Reference proteome</keyword>
<keyword id="KW-0808">Transferase</keyword>
<organism>
    <name type="scientific">Dictyostelium discoideum</name>
    <name type="common">Social amoeba</name>
    <dbReference type="NCBI Taxonomy" id="44689"/>
    <lineage>
        <taxon>Eukaryota</taxon>
        <taxon>Amoebozoa</taxon>
        <taxon>Evosea</taxon>
        <taxon>Eumycetozoa</taxon>
        <taxon>Dictyostelia</taxon>
        <taxon>Dictyosteliales</taxon>
        <taxon>Dictyosteliaceae</taxon>
        <taxon>Dictyostelium</taxon>
    </lineage>
</organism>
<name>ARY2_DICDI</name>
<proteinExistence type="inferred from homology"/>
<accession>Q54IU8</accession>
<gene>
    <name type="ORF">DDB_G0288507</name>
</gene>
<feature type="chain" id="PRO_0000327945" description="Probable arylamine N-acetyltransferase 2">
    <location>
        <begin position="1"/>
        <end position="299"/>
    </location>
</feature>
<feature type="active site" description="Acyl-thioester intermediate" evidence="1">
    <location>
        <position position="75"/>
    </location>
</feature>
<feature type="active site" evidence="1">
    <location>
        <position position="115"/>
    </location>
</feature>
<feature type="active site" evidence="1">
    <location>
        <position position="130"/>
    </location>
</feature>